<evidence type="ECO:0000255" key="1">
    <source>
        <dbReference type="HAMAP-Rule" id="MF_01813"/>
    </source>
</evidence>
<reference key="1">
    <citation type="journal article" date="2009" name="J. Bacteriol.">
        <title>Genome sequences of three Agrobacterium biovars help elucidate the evolution of multichromosome genomes in bacteria.</title>
        <authorList>
            <person name="Slater S.C."/>
            <person name="Goldman B.S."/>
            <person name="Goodner B."/>
            <person name="Setubal J.C."/>
            <person name="Farrand S.K."/>
            <person name="Nester E.W."/>
            <person name="Burr T.J."/>
            <person name="Banta L."/>
            <person name="Dickerman A.W."/>
            <person name="Paulsen I."/>
            <person name="Otten L."/>
            <person name="Suen G."/>
            <person name="Welch R."/>
            <person name="Almeida N.F."/>
            <person name="Arnold F."/>
            <person name="Burton O.T."/>
            <person name="Du Z."/>
            <person name="Ewing A."/>
            <person name="Godsy E."/>
            <person name="Heisel S."/>
            <person name="Houmiel K.L."/>
            <person name="Jhaveri J."/>
            <person name="Lu J."/>
            <person name="Miller N.M."/>
            <person name="Norton S."/>
            <person name="Chen Q."/>
            <person name="Phoolcharoen W."/>
            <person name="Ohlin V."/>
            <person name="Ondrusek D."/>
            <person name="Pride N."/>
            <person name="Stricklin S.L."/>
            <person name="Sun J."/>
            <person name="Wheeler C."/>
            <person name="Wilson L."/>
            <person name="Zhu H."/>
            <person name="Wood D.W."/>
        </authorList>
    </citation>
    <scope>NUCLEOTIDE SEQUENCE [LARGE SCALE GENOMIC DNA]</scope>
    <source>
        <strain>K84 / ATCC BAA-868</strain>
    </source>
</reference>
<protein>
    <recommendedName>
        <fullName evidence="1">Ubiquinone/menaquinone biosynthesis C-methyltransferase UbiE</fullName>
        <ecNumber evidence="1">2.1.1.163</ecNumber>
        <ecNumber evidence="1">2.1.1.201</ecNumber>
    </recommendedName>
    <alternativeName>
        <fullName evidence="1">2-methoxy-6-polyprenyl-1,4-benzoquinol methylase</fullName>
    </alternativeName>
    <alternativeName>
        <fullName evidence="1">Demethylmenaquinone methyltransferase</fullName>
    </alternativeName>
</protein>
<sequence length="258" mass="28639">MAESRTSADGGMETSYGFREVADGEKQGLVNEVFHKVAKRYDIMNDVMSMGLHRAWKDAMISALNPRKDPSYKVLDVAGGTGDIAFRIVEASNRLAHATVLDINGSMLGVGAERAAKKKLTDNLTFVEANAEELPFEPNSFDAYTIAFGIRNVPRIDVALKEAYRVLKRGGRLLVLEFSEVDLPLLDRVYEAWSFNAIPQFGKAITGDAEPYQYLVESIRKFPNQQDFATMIREAGFSRVNFTNYTGGIAALHSGWKL</sequence>
<keyword id="KW-0474">Menaquinone biosynthesis</keyword>
<keyword id="KW-0489">Methyltransferase</keyword>
<keyword id="KW-0949">S-adenosyl-L-methionine</keyword>
<keyword id="KW-0808">Transferase</keyword>
<keyword id="KW-0831">Ubiquinone biosynthesis</keyword>
<accession>B9J7S8</accession>
<organism>
    <name type="scientific">Rhizobium rhizogenes (strain K84 / ATCC BAA-868)</name>
    <name type="common">Agrobacterium radiobacter</name>
    <dbReference type="NCBI Taxonomy" id="311403"/>
    <lineage>
        <taxon>Bacteria</taxon>
        <taxon>Pseudomonadati</taxon>
        <taxon>Pseudomonadota</taxon>
        <taxon>Alphaproteobacteria</taxon>
        <taxon>Hyphomicrobiales</taxon>
        <taxon>Rhizobiaceae</taxon>
        <taxon>Rhizobium/Agrobacterium group</taxon>
        <taxon>Rhizobium</taxon>
    </lineage>
</organism>
<gene>
    <name evidence="1" type="primary">ubiE</name>
    <name type="ordered locus">Arad_0595</name>
</gene>
<feature type="chain" id="PRO_1000187722" description="Ubiquinone/menaquinone biosynthesis C-methyltransferase UbiE">
    <location>
        <begin position="1"/>
        <end position="258"/>
    </location>
</feature>
<feature type="binding site" evidence="1">
    <location>
        <position position="81"/>
    </location>
    <ligand>
        <name>S-adenosyl-L-methionine</name>
        <dbReference type="ChEBI" id="CHEBI:59789"/>
    </ligand>
</feature>
<feature type="binding site" evidence="1">
    <location>
        <position position="102"/>
    </location>
    <ligand>
        <name>S-adenosyl-L-methionine</name>
        <dbReference type="ChEBI" id="CHEBI:59789"/>
    </ligand>
</feature>
<feature type="binding site" evidence="1">
    <location>
        <begin position="130"/>
        <end position="131"/>
    </location>
    <ligand>
        <name>S-adenosyl-L-methionine</name>
        <dbReference type="ChEBI" id="CHEBI:59789"/>
    </ligand>
</feature>
<name>UBIE_RHIR8</name>
<comment type="function">
    <text evidence="1">Methyltransferase required for the conversion of demethylmenaquinol (DMKH2) to menaquinol (MKH2) and the conversion of 2-polyprenyl-6-methoxy-1,4-benzoquinol (DDMQH2) to 2-polyprenyl-3-methyl-6-methoxy-1,4-benzoquinol (DMQH2).</text>
</comment>
<comment type="catalytic activity">
    <reaction evidence="1">
        <text>a 2-demethylmenaquinol + S-adenosyl-L-methionine = a menaquinol + S-adenosyl-L-homocysteine + H(+)</text>
        <dbReference type="Rhea" id="RHEA:42640"/>
        <dbReference type="Rhea" id="RHEA-COMP:9539"/>
        <dbReference type="Rhea" id="RHEA-COMP:9563"/>
        <dbReference type="ChEBI" id="CHEBI:15378"/>
        <dbReference type="ChEBI" id="CHEBI:18151"/>
        <dbReference type="ChEBI" id="CHEBI:55437"/>
        <dbReference type="ChEBI" id="CHEBI:57856"/>
        <dbReference type="ChEBI" id="CHEBI:59789"/>
        <dbReference type="EC" id="2.1.1.163"/>
    </reaction>
</comment>
<comment type="catalytic activity">
    <reaction evidence="1">
        <text>a 2-methoxy-6-(all-trans-polyprenyl)benzene-1,4-diol + S-adenosyl-L-methionine = a 5-methoxy-2-methyl-3-(all-trans-polyprenyl)benzene-1,4-diol + S-adenosyl-L-homocysteine + H(+)</text>
        <dbReference type="Rhea" id="RHEA:28286"/>
        <dbReference type="Rhea" id="RHEA-COMP:10858"/>
        <dbReference type="Rhea" id="RHEA-COMP:10859"/>
        <dbReference type="ChEBI" id="CHEBI:15378"/>
        <dbReference type="ChEBI" id="CHEBI:57856"/>
        <dbReference type="ChEBI" id="CHEBI:59789"/>
        <dbReference type="ChEBI" id="CHEBI:84166"/>
        <dbReference type="ChEBI" id="CHEBI:84167"/>
        <dbReference type="EC" id="2.1.1.201"/>
    </reaction>
</comment>
<comment type="pathway">
    <text evidence="1">Quinol/quinone metabolism; menaquinone biosynthesis; menaquinol from 1,4-dihydroxy-2-naphthoate: step 2/2.</text>
</comment>
<comment type="pathway">
    <text evidence="1">Cofactor biosynthesis; ubiquinone biosynthesis.</text>
</comment>
<comment type="similarity">
    <text evidence="1">Belongs to the class I-like SAM-binding methyltransferase superfamily. MenG/UbiE family.</text>
</comment>
<proteinExistence type="inferred from homology"/>
<dbReference type="EC" id="2.1.1.163" evidence="1"/>
<dbReference type="EC" id="2.1.1.201" evidence="1"/>
<dbReference type="EMBL" id="CP000628">
    <property type="protein sequence ID" value="ACM25250.1"/>
    <property type="molecule type" value="Genomic_DNA"/>
</dbReference>
<dbReference type="RefSeq" id="WP_007702705.1">
    <property type="nucleotide sequence ID" value="NC_011985.1"/>
</dbReference>
<dbReference type="SMR" id="B9J7S8"/>
<dbReference type="STRING" id="311403.Arad_0595"/>
<dbReference type="GeneID" id="86850900"/>
<dbReference type="KEGG" id="ara:Arad_0595"/>
<dbReference type="eggNOG" id="COG2226">
    <property type="taxonomic scope" value="Bacteria"/>
</dbReference>
<dbReference type="HOGENOM" id="CLU_037990_0_1_5"/>
<dbReference type="UniPathway" id="UPA00079">
    <property type="reaction ID" value="UER00169"/>
</dbReference>
<dbReference type="UniPathway" id="UPA00232"/>
<dbReference type="Proteomes" id="UP000001600">
    <property type="component" value="Chromosome 1"/>
</dbReference>
<dbReference type="GO" id="GO:0008425">
    <property type="term" value="F:2-methoxy-6-polyprenyl-1,4-benzoquinol methyltransferase activity"/>
    <property type="evidence" value="ECO:0007669"/>
    <property type="project" value="UniProtKB-UniRule"/>
</dbReference>
<dbReference type="GO" id="GO:0043770">
    <property type="term" value="F:demethylmenaquinone methyltransferase activity"/>
    <property type="evidence" value="ECO:0007669"/>
    <property type="project" value="UniProtKB-UniRule"/>
</dbReference>
<dbReference type="GO" id="GO:0009060">
    <property type="term" value="P:aerobic respiration"/>
    <property type="evidence" value="ECO:0007669"/>
    <property type="project" value="UniProtKB-UniRule"/>
</dbReference>
<dbReference type="GO" id="GO:0009234">
    <property type="term" value="P:menaquinone biosynthetic process"/>
    <property type="evidence" value="ECO:0007669"/>
    <property type="project" value="UniProtKB-UniRule"/>
</dbReference>
<dbReference type="GO" id="GO:0032259">
    <property type="term" value="P:methylation"/>
    <property type="evidence" value="ECO:0007669"/>
    <property type="project" value="UniProtKB-KW"/>
</dbReference>
<dbReference type="CDD" id="cd02440">
    <property type="entry name" value="AdoMet_MTases"/>
    <property type="match status" value="1"/>
</dbReference>
<dbReference type="Gene3D" id="3.40.50.150">
    <property type="entry name" value="Vaccinia Virus protein VP39"/>
    <property type="match status" value="1"/>
</dbReference>
<dbReference type="HAMAP" id="MF_01813">
    <property type="entry name" value="MenG_UbiE_methyltr"/>
    <property type="match status" value="1"/>
</dbReference>
<dbReference type="InterPro" id="IPR029063">
    <property type="entry name" value="SAM-dependent_MTases_sf"/>
</dbReference>
<dbReference type="InterPro" id="IPR004033">
    <property type="entry name" value="UbiE/COQ5_MeTrFase"/>
</dbReference>
<dbReference type="InterPro" id="IPR023576">
    <property type="entry name" value="UbiE/COQ5_MeTrFase_CS"/>
</dbReference>
<dbReference type="NCBIfam" id="TIGR01934">
    <property type="entry name" value="MenG_MenH_UbiE"/>
    <property type="match status" value="1"/>
</dbReference>
<dbReference type="NCBIfam" id="NF001242">
    <property type="entry name" value="PRK00216.1-3"/>
    <property type="match status" value="1"/>
</dbReference>
<dbReference type="NCBIfam" id="NF001244">
    <property type="entry name" value="PRK00216.1-5"/>
    <property type="match status" value="1"/>
</dbReference>
<dbReference type="PANTHER" id="PTHR43591:SF24">
    <property type="entry name" value="2-METHOXY-6-POLYPRENYL-1,4-BENZOQUINOL METHYLASE, MITOCHONDRIAL"/>
    <property type="match status" value="1"/>
</dbReference>
<dbReference type="PANTHER" id="PTHR43591">
    <property type="entry name" value="METHYLTRANSFERASE"/>
    <property type="match status" value="1"/>
</dbReference>
<dbReference type="Pfam" id="PF01209">
    <property type="entry name" value="Ubie_methyltran"/>
    <property type="match status" value="1"/>
</dbReference>
<dbReference type="SUPFAM" id="SSF53335">
    <property type="entry name" value="S-adenosyl-L-methionine-dependent methyltransferases"/>
    <property type="match status" value="1"/>
</dbReference>
<dbReference type="PROSITE" id="PS51608">
    <property type="entry name" value="SAM_MT_UBIE"/>
    <property type="match status" value="1"/>
</dbReference>
<dbReference type="PROSITE" id="PS01183">
    <property type="entry name" value="UBIE_1"/>
    <property type="match status" value="1"/>
</dbReference>
<dbReference type="PROSITE" id="PS01184">
    <property type="entry name" value="UBIE_2"/>
    <property type="match status" value="1"/>
</dbReference>